<protein>
    <recommendedName>
        <fullName evidence="7">Dermonecrotic toxin LarSicTox-alphaIB1aii</fullName>
        <ecNumber evidence="4">4.6.1.-</ecNumber>
    </recommendedName>
    <alternativeName>
        <fullName>Phospholipase D</fullName>
        <shortName>PLD</shortName>
    </alternativeName>
    <alternativeName>
        <fullName>Sphingomyelin phosphodiesterase D</fullName>
        <shortName>SMD</shortName>
        <shortName>SMase D</shortName>
        <shortName>Sphingomyelinase D</shortName>
    </alternativeName>
</protein>
<reference key="1">
    <citation type="journal article" date="2009" name="Mol. Biol. Evol.">
        <title>Molecular evolution, functional variation, and proposed nomenclature of the gene family that includes sphingomyelinase D in sicariid spider venoms.</title>
        <authorList>
            <person name="Binford G.J."/>
            <person name="Bodner M.R."/>
            <person name="Cordes M.H."/>
            <person name="Baldwin K.L."/>
            <person name="Rynerson M.R."/>
            <person name="Burns S.N."/>
            <person name="Zobel-Thropp P.A."/>
        </authorList>
    </citation>
    <scope>NUCLEOTIDE SEQUENCE [MRNA]</scope>
    <scope>NOMENCLATURE</scope>
    <source>
        <tissue>Venom gland</tissue>
    </source>
</reference>
<name>A1KA2_LOXAR</name>
<feature type="chain" id="PRO_0000392767" description="Dermonecrotic toxin LarSicTox-alphaIB1aii">
    <location>
        <begin position="1" status="less than"/>
        <end position="273"/>
    </location>
</feature>
<feature type="active site" evidence="5">
    <location>
        <position position="5"/>
    </location>
</feature>
<feature type="active site" description="Nucleophile" evidence="5">
    <location>
        <position position="41"/>
    </location>
</feature>
<feature type="binding site" evidence="5">
    <location>
        <position position="25"/>
    </location>
    <ligand>
        <name>Mg(2+)</name>
        <dbReference type="ChEBI" id="CHEBI:18420"/>
    </ligand>
</feature>
<feature type="binding site" evidence="5">
    <location>
        <position position="27"/>
    </location>
    <ligand>
        <name>Mg(2+)</name>
        <dbReference type="ChEBI" id="CHEBI:18420"/>
    </ligand>
</feature>
<feature type="binding site" evidence="5">
    <location>
        <position position="85"/>
    </location>
    <ligand>
        <name>Mg(2+)</name>
        <dbReference type="ChEBI" id="CHEBI:18420"/>
    </ligand>
</feature>
<feature type="glycosylation site" description="N-linked (GlcNAc...) asparagine" evidence="6">
    <location>
        <position position="250"/>
    </location>
</feature>
<feature type="disulfide bond" evidence="3">
    <location>
        <begin position="45"/>
        <end position="51"/>
    </location>
</feature>
<feature type="disulfide bond" evidence="3">
    <location>
        <begin position="47"/>
        <end position="190"/>
    </location>
</feature>
<feature type="non-terminal residue">
    <location>
        <position position="1"/>
    </location>
</feature>
<accession>C0JAV0</accession>
<keyword id="KW-0204">Cytolysis</keyword>
<keyword id="KW-1061">Dermonecrotic toxin</keyword>
<keyword id="KW-1015">Disulfide bond</keyword>
<keyword id="KW-0325">Glycoprotein</keyword>
<keyword id="KW-0354">Hemolysis</keyword>
<keyword id="KW-0442">Lipid degradation</keyword>
<keyword id="KW-0443">Lipid metabolism</keyword>
<keyword id="KW-0456">Lyase</keyword>
<keyword id="KW-0460">Magnesium</keyword>
<keyword id="KW-0479">Metal-binding</keyword>
<keyword id="KW-0964">Secreted</keyword>
<keyword id="KW-0800">Toxin</keyword>
<sequence length="273" mass="30390">WIMGHMVNAIAQIDEFVNLGANSIETDVSFDSSANPEYTYHGVPCDCGRTCTKWEHFNEFLKGLRKATTPGDSKYHEKLVLVVFDLKTGSLYDNQASDAGKKLAKSLLQNYWNNGNNGGRAYIVLSIPNLAHYKLIAGFKEALTSEGHPELMDKVGYDFSGNDDIGDVANAYKKAGVTGHVWQSDGITNCLLRGLDRVRKAVANRDSSNGYINKVYYWTVDKRQSTRDALDAGVDGIMTNYPDVVADVLNESAYKAKFRIASYDDNPWETFKN</sequence>
<organism>
    <name type="scientific">Loxosceles arizonica</name>
    <name type="common">Arizona brown spider</name>
    <dbReference type="NCBI Taxonomy" id="196454"/>
    <lineage>
        <taxon>Eukaryota</taxon>
        <taxon>Metazoa</taxon>
        <taxon>Ecdysozoa</taxon>
        <taxon>Arthropoda</taxon>
        <taxon>Chelicerata</taxon>
        <taxon>Arachnida</taxon>
        <taxon>Araneae</taxon>
        <taxon>Araneomorphae</taxon>
        <taxon>Haplogynae</taxon>
        <taxon>Scytodoidea</taxon>
        <taxon>Sicariidae</taxon>
        <taxon>Loxosceles</taxon>
    </lineage>
</organism>
<comment type="function">
    <text evidence="1 3">Dermonecrotic toxins cleave the phosphodiester linkage between the phosphate and headgroup of certain phospholipids (sphingolipid and lysolipid substrates), forming an alcohol (often choline) and a cyclic phosphate (By similarity). This toxin acts on sphingomyelin (SM) (By similarity). It may also act on ceramide phosphoethanolamine (CPE), lysophosphatidylcholine (LPC) and lysophosphatidylethanolamine (LPE), but not on lysophosphatidylserine (LPS), and lysophosphatidylglycerol (LPG) (By similarity). It acts by transphosphatidylation, releasing exclusively cyclic phosphate products as second products (By similarity). Induces dermonecrosis, hemolysis, increased vascular permeability, edema, inflammatory response, and platelet aggregation (By similarity).</text>
</comment>
<comment type="catalytic activity">
    <reaction evidence="1">
        <text>an N-(acyl)-sphingosylphosphocholine = an N-(acyl)-sphingosyl-1,3-cyclic phosphate + choline</text>
        <dbReference type="Rhea" id="RHEA:60652"/>
        <dbReference type="ChEBI" id="CHEBI:15354"/>
        <dbReference type="ChEBI" id="CHEBI:64583"/>
        <dbReference type="ChEBI" id="CHEBI:143892"/>
    </reaction>
</comment>
<comment type="catalytic activity">
    <reaction evidence="1">
        <text>an N-(acyl)-sphingosylphosphoethanolamine = an N-(acyl)-sphingosyl-1,3-cyclic phosphate + ethanolamine</text>
        <dbReference type="Rhea" id="RHEA:60648"/>
        <dbReference type="ChEBI" id="CHEBI:57603"/>
        <dbReference type="ChEBI" id="CHEBI:143891"/>
        <dbReference type="ChEBI" id="CHEBI:143892"/>
    </reaction>
</comment>
<comment type="catalytic activity">
    <reaction evidence="1">
        <text>a 1-acyl-sn-glycero-3-phosphocholine = a 1-acyl-sn-glycero-2,3-cyclic phosphate + choline</text>
        <dbReference type="Rhea" id="RHEA:60700"/>
        <dbReference type="ChEBI" id="CHEBI:15354"/>
        <dbReference type="ChEBI" id="CHEBI:58168"/>
        <dbReference type="ChEBI" id="CHEBI:143947"/>
    </reaction>
</comment>
<comment type="catalytic activity">
    <reaction evidence="1">
        <text>a 1-acyl-sn-glycero-3-phosphoethanolamine = a 1-acyl-sn-glycero-2,3-cyclic phosphate + ethanolamine</text>
        <dbReference type="Rhea" id="RHEA:60704"/>
        <dbReference type="ChEBI" id="CHEBI:57603"/>
        <dbReference type="ChEBI" id="CHEBI:64381"/>
        <dbReference type="ChEBI" id="CHEBI:143947"/>
    </reaction>
</comment>
<comment type="cofactor">
    <cofactor evidence="5">
        <name>Mg(2+)</name>
        <dbReference type="ChEBI" id="CHEBI:18420"/>
    </cofactor>
    <text evidence="5">Binds 1 Mg(2+) ion per subunit.</text>
</comment>
<comment type="subcellular location">
    <subcellularLocation>
        <location evidence="9">Secreted</location>
    </subcellularLocation>
</comment>
<comment type="tissue specificity">
    <text evidence="9">Expressed by the venom gland.</text>
</comment>
<comment type="similarity">
    <text evidence="8">Belongs to the arthropod phospholipase D family. Class II subfamily.</text>
</comment>
<comment type="caution">
    <text evidence="1 2 4">The most common activity assay for dermonecrotic toxins detects enzymatic activity by monitoring choline release from substrate. Liberation of choline from sphingomyelin (SM) or lysophosphatidylcholine (LPC) is commonly assumed to result from substrate hydrolysis, giving either ceramide-1-phosphate (C1P) or lysophosphatidic acid (LPA), respectively, as a second product. However, two studies from Lajoie and colleagues (2013 and 2015) report the observation of exclusive formation of cyclic phosphate products as second products, resulting from intramolecular transphosphatidylation. Cyclic phosphates have vastly different biological properties from their monoester counterparts, and they may be relevant to the pathology of brown spider envenomation.</text>
</comment>
<proteinExistence type="evidence at transcript level"/>
<dbReference type="EC" id="4.6.1.-" evidence="4"/>
<dbReference type="EMBL" id="FJ171385">
    <property type="protein sequence ID" value="ACN48881.1"/>
    <property type="molecule type" value="mRNA"/>
</dbReference>
<dbReference type="SMR" id="C0JAV0"/>
<dbReference type="GO" id="GO:0005576">
    <property type="term" value="C:extracellular region"/>
    <property type="evidence" value="ECO:0007669"/>
    <property type="project" value="UniProtKB-SubCell"/>
</dbReference>
<dbReference type="GO" id="GO:0016829">
    <property type="term" value="F:lyase activity"/>
    <property type="evidence" value="ECO:0007669"/>
    <property type="project" value="UniProtKB-KW"/>
</dbReference>
<dbReference type="GO" id="GO:0046872">
    <property type="term" value="F:metal ion binding"/>
    <property type="evidence" value="ECO:0007669"/>
    <property type="project" value="UniProtKB-KW"/>
</dbReference>
<dbReference type="GO" id="GO:0008081">
    <property type="term" value="F:phosphoric diester hydrolase activity"/>
    <property type="evidence" value="ECO:0007669"/>
    <property type="project" value="InterPro"/>
</dbReference>
<dbReference type="GO" id="GO:0090729">
    <property type="term" value="F:toxin activity"/>
    <property type="evidence" value="ECO:0007669"/>
    <property type="project" value="UniProtKB-KW"/>
</dbReference>
<dbReference type="GO" id="GO:0031640">
    <property type="term" value="P:killing of cells of another organism"/>
    <property type="evidence" value="ECO:0007669"/>
    <property type="project" value="UniProtKB-KW"/>
</dbReference>
<dbReference type="GO" id="GO:0016042">
    <property type="term" value="P:lipid catabolic process"/>
    <property type="evidence" value="ECO:0007669"/>
    <property type="project" value="UniProtKB-KW"/>
</dbReference>
<dbReference type="CDD" id="cd08576">
    <property type="entry name" value="GDPD_like_SMaseD_PLD"/>
    <property type="match status" value="1"/>
</dbReference>
<dbReference type="Gene3D" id="3.20.20.190">
    <property type="entry name" value="Phosphatidylinositol (PI) phosphodiesterase"/>
    <property type="match status" value="1"/>
</dbReference>
<dbReference type="InterPro" id="IPR017946">
    <property type="entry name" value="PLC-like_Pdiesterase_TIM-brl"/>
</dbReference>
<dbReference type="Pfam" id="PF13653">
    <property type="entry name" value="GDPD_2"/>
    <property type="match status" value="1"/>
</dbReference>
<dbReference type="SUPFAM" id="SSF51695">
    <property type="entry name" value="PLC-like phosphodiesterases"/>
    <property type="match status" value="1"/>
</dbReference>
<evidence type="ECO:0000250" key="1">
    <source>
        <dbReference type="UniProtKB" id="A0A0D4WTV1"/>
    </source>
</evidence>
<evidence type="ECO:0000250" key="2">
    <source>
        <dbReference type="UniProtKB" id="A0A0D4WV12"/>
    </source>
</evidence>
<evidence type="ECO:0000250" key="3">
    <source>
        <dbReference type="UniProtKB" id="P0CE80"/>
    </source>
</evidence>
<evidence type="ECO:0000250" key="4">
    <source>
        <dbReference type="UniProtKB" id="Q4ZFU2"/>
    </source>
</evidence>
<evidence type="ECO:0000250" key="5">
    <source>
        <dbReference type="UniProtKB" id="Q8I914"/>
    </source>
</evidence>
<evidence type="ECO:0000255" key="6"/>
<evidence type="ECO:0000303" key="7">
    <source>
    </source>
</evidence>
<evidence type="ECO:0000305" key="8"/>
<evidence type="ECO:0000305" key="9">
    <source>
    </source>
</evidence>